<sequence length="55" mass="5680">MEFTTAMLGASLISTTSTQSKHNLVNNCCCSSSTSESSMPASCACTKCGCKTCKC</sequence>
<accession>Q9HFD0</accession>
<accession>B5FVC8</accession>
<evidence type="ECO:0000305" key="1"/>
<name>MT3_YARLI</name>
<protein>
    <recommendedName>
        <fullName>Metallothionein-3</fullName>
        <shortName>MT-3</shortName>
    </recommendedName>
    <alternativeName>
        <fullName>MTPIII</fullName>
    </alternativeName>
    <alternativeName>
        <fullName>Metallothionein-III</fullName>
        <shortName>MT-III</shortName>
    </alternativeName>
</protein>
<dbReference type="EMBL" id="AJ250175">
    <property type="protein sequence ID" value="CAC12964.1"/>
    <property type="molecule type" value="Genomic_DNA"/>
</dbReference>
<dbReference type="EMBL" id="CR382129">
    <property type="protein sequence ID" value="CAR64300.1"/>
    <property type="molecule type" value="Genomic_DNA"/>
</dbReference>
<dbReference type="RefSeq" id="XP_002143035.1">
    <property type="nucleotide sequence ID" value="XM_002142999.1"/>
</dbReference>
<dbReference type="EnsemblFungi" id="CAR64300">
    <property type="protein sequence ID" value="CAR64300"/>
    <property type="gene ID" value="YALI0_C18475g"/>
</dbReference>
<dbReference type="VEuPathDB" id="FungiDB:YALI0_C18475g"/>
<dbReference type="HOGENOM" id="CLU_3034143_0_0_1"/>
<dbReference type="InParanoid" id="Q9HFD0"/>
<dbReference type="Proteomes" id="UP000001300">
    <property type="component" value="Chromosome C"/>
</dbReference>
<dbReference type="GO" id="GO:0005507">
    <property type="term" value="F:copper ion binding"/>
    <property type="evidence" value="ECO:0007669"/>
    <property type="project" value="InterPro"/>
</dbReference>
<dbReference type="GO" id="GO:1990748">
    <property type="term" value="P:cellular detoxification"/>
    <property type="evidence" value="ECO:0000250"/>
    <property type="project" value="UniProtKB"/>
</dbReference>
<dbReference type="InterPro" id="IPR000869">
    <property type="entry name" value="Metalthion_11"/>
</dbReference>
<dbReference type="Pfam" id="PF02066">
    <property type="entry name" value="Metallothio_11"/>
    <property type="match status" value="1"/>
</dbReference>
<dbReference type="PRINTS" id="PR00874">
    <property type="entry name" value="MTFUNGIIV"/>
</dbReference>
<feature type="chain" id="PRO_0000197368" description="Metallothionein-3">
    <location>
        <begin position="1"/>
        <end position="55"/>
    </location>
</feature>
<comment type="similarity">
    <text evidence="1">Belongs to the metallothionein superfamily. Type 11 family.</text>
</comment>
<keyword id="KW-0186">Copper</keyword>
<keyword id="KW-0479">Metal-binding</keyword>
<keyword id="KW-0480">Metal-thiolate cluster</keyword>
<keyword id="KW-1185">Reference proteome</keyword>
<reference key="1">
    <citation type="submission" date="1999-10" db="EMBL/GenBank/DDBJ databases">
        <title>Divergence between mechanisms for metal resistance in yeasts: the metallothionein genes from Yarrowia lipolytica.</title>
        <authorList>
            <person name="Garcia S."/>
            <person name="Prado M."/>
            <person name="Dominguez A."/>
        </authorList>
    </citation>
    <scope>NUCLEOTIDE SEQUENCE [GENOMIC DNA]</scope>
    <source>
        <strain>ATCC 90811 / CLIB 163 / JM12</strain>
    </source>
</reference>
<reference key="2">
    <citation type="journal article" date="2004" name="Nature">
        <title>Genome evolution in yeasts.</title>
        <authorList>
            <person name="Dujon B."/>
            <person name="Sherman D."/>
            <person name="Fischer G."/>
            <person name="Durrens P."/>
            <person name="Casaregola S."/>
            <person name="Lafontaine I."/>
            <person name="de Montigny J."/>
            <person name="Marck C."/>
            <person name="Neuveglise C."/>
            <person name="Talla E."/>
            <person name="Goffard N."/>
            <person name="Frangeul L."/>
            <person name="Aigle M."/>
            <person name="Anthouard V."/>
            <person name="Babour A."/>
            <person name="Barbe V."/>
            <person name="Barnay S."/>
            <person name="Blanchin S."/>
            <person name="Beckerich J.-M."/>
            <person name="Beyne E."/>
            <person name="Bleykasten C."/>
            <person name="Boisrame A."/>
            <person name="Boyer J."/>
            <person name="Cattolico L."/>
            <person name="Confanioleri F."/>
            <person name="de Daruvar A."/>
            <person name="Despons L."/>
            <person name="Fabre E."/>
            <person name="Fairhead C."/>
            <person name="Ferry-Dumazet H."/>
            <person name="Groppi A."/>
            <person name="Hantraye F."/>
            <person name="Hennequin C."/>
            <person name="Jauniaux N."/>
            <person name="Joyet P."/>
            <person name="Kachouri R."/>
            <person name="Kerrest A."/>
            <person name="Koszul R."/>
            <person name="Lemaire M."/>
            <person name="Lesur I."/>
            <person name="Ma L."/>
            <person name="Muller H."/>
            <person name="Nicaud J.-M."/>
            <person name="Nikolski M."/>
            <person name="Oztas S."/>
            <person name="Ozier-Kalogeropoulos O."/>
            <person name="Pellenz S."/>
            <person name="Potier S."/>
            <person name="Richard G.-F."/>
            <person name="Straub M.-L."/>
            <person name="Suleau A."/>
            <person name="Swennen D."/>
            <person name="Tekaia F."/>
            <person name="Wesolowski-Louvel M."/>
            <person name="Westhof E."/>
            <person name="Wirth B."/>
            <person name="Zeniou-Meyer M."/>
            <person name="Zivanovic Y."/>
            <person name="Bolotin-Fukuhara M."/>
            <person name="Thierry A."/>
            <person name="Bouchier C."/>
            <person name="Caudron B."/>
            <person name="Scarpelli C."/>
            <person name="Gaillardin C."/>
            <person name="Weissenbach J."/>
            <person name="Wincker P."/>
            <person name="Souciet J.-L."/>
        </authorList>
    </citation>
    <scope>NUCLEOTIDE SEQUENCE [LARGE SCALE GENOMIC DNA]</scope>
    <source>
        <strain>CLIB 122 / E 150</strain>
    </source>
</reference>
<gene>
    <name type="primary">MTP3</name>
    <name type="ordered locus">YALI0C18475g</name>
</gene>
<proteinExistence type="inferred from homology"/>
<organism>
    <name type="scientific">Yarrowia lipolytica (strain CLIB 122 / E 150)</name>
    <name type="common">Yeast</name>
    <name type="synonym">Candida lipolytica</name>
    <dbReference type="NCBI Taxonomy" id="284591"/>
    <lineage>
        <taxon>Eukaryota</taxon>
        <taxon>Fungi</taxon>
        <taxon>Dikarya</taxon>
        <taxon>Ascomycota</taxon>
        <taxon>Saccharomycotina</taxon>
        <taxon>Dipodascomycetes</taxon>
        <taxon>Dipodascales</taxon>
        <taxon>Dipodascales incertae sedis</taxon>
        <taxon>Yarrowia</taxon>
    </lineage>
</organism>